<organism>
    <name type="scientific">Cassava vein mosaic virus</name>
    <name type="common">CsVMV</name>
    <dbReference type="NCBI Taxonomy" id="38062"/>
    <lineage>
        <taxon>Viruses</taxon>
        <taxon>Riboviria</taxon>
        <taxon>Pararnavirae</taxon>
        <taxon>Artverviricota</taxon>
        <taxon>Revtraviricetes</taxon>
        <taxon>Ortervirales</taxon>
        <taxon>Caulimoviridae</taxon>
        <taxon>Cavemovirus</taxon>
        <taxon>Cavemovirus venamanihotis</taxon>
    </lineage>
</organism>
<comment type="function">
    <text evidence="1">Enhances the translation of downstream ORFs on polycistronic mRNAs derived from cassava vein mosaic virus.</text>
</comment>
<comment type="subcellular location">
    <subcellularLocation>
        <location>Host cytoplasm</location>
    </subcellularLocation>
    <text evidence="1">Found in cytoplasmic occlusion bodies.</text>
</comment>
<comment type="miscellaneous">
    <text>The inclusion bodies are the site of viral DNA synthesis, virion assembly and accumulation in the infected cell.</text>
</comment>
<comment type="similarity">
    <text evidence="4">Belongs to the caulimoviridae viroplasmin family.</text>
</comment>
<sequence length="392" mass="46294">MEDMMKQILEKLNTIEKNISETNIRIEKIEKEQELKRKVELYGKEPEKKLHKENIEKLSSSIEDKIIQNIDKKLKKIENVEEQYQWKNIVKINKPLSVGEKYMENFKKILVYLGEKHPKLEELYSLTDYNKLVADIYTDRNLVISAYNYGLLQVLYIEHPSQLELFDENIKLAYMKFRNVTKAQLIYMRIYSAMAEPYDKGVIPKIEIIKFGITYSKLKYDEVYEHQPIEKLDLKKFISQKRALGILVIQKEIENLNGNVWLYSNLDGRLILSNHNKAENVEVKNILSDWSKKLSIPEGNYPRCSIKNPMFTGKTMEVLCELSKKQINMRHICNLCSKMKNVQIQDPILPEYEEEYVEIEKEEPGEEKNLEDVSTDDNNEKKKIRSVIVKET</sequence>
<keyword id="KW-0175">Coiled coil</keyword>
<keyword id="KW-1035">Host cytoplasm</keyword>
<keyword id="KW-1185">Reference proteome</keyword>
<keyword id="KW-0810">Translation regulation</keyword>
<name>IBMP_CSVMV</name>
<reference key="1">
    <citation type="journal article" date="1998" name="Arch. Virol.">
        <title>Cassava vein mosaic virus (CsVMV), type species for a new genus of plant double stranded DNA viruses?</title>
        <authorList>
            <person name="de Kochko A."/>
            <person name="Verdaguer B."/>
            <person name="Taylor N."/>
            <person name="Carcamo R."/>
            <person name="Beachy R.N."/>
            <person name="Fauquet C."/>
        </authorList>
    </citation>
    <scope>NUCLEOTIDE SEQUENCE [GENOMIC DNA]</scope>
</reference>
<reference key="2">
    <citation type="submission" date="1996-06" db="EMBL/GenBank/DDBJ databases">
        <authorList>
            <person name="Kochko de A."/>
            <person name="Verdaguer B."/>
            <person name="Beachy R.N."/>
            <person name="Fauquet C."/>
        </authorList>
    </citation>
    <scope>NUCLEOTIDE SEQUENCE [GENOMIC DNA]</scope>
</reference>
<accession>Q66284</accession>
<protein>
    <recommendedName>
        <fullName>Putative transactivator/viroplasmin protein</fullName>
        <shortName>Tav</shortName>
    </recommendedName>
    <alternativeName>
        <fullName>Inclusion body matrix protein</fullName>
    </alternativeName>
</protein>
<proteinExistence type="inferred from homology"/>
<evidence type="ECO:0000250" key="1"/>
<evidence type="ECO:0000255" key="2"/>
<evidence type="ECO:0000256" key="3">
    <source>
        <dbReference type="SAM" id="MobiDB-lite"/>
    </source>
</evidence>
<evidence type="ECO:0000305" key="4"/>
<dbReference type="EMBL" id="U59751">
    <property type="protein sequence ID" value="AAB03328.1"/>
    <property type="molecule type" value="Genomic_DNA"/>
</dbReference>
<dbReference type="RefSeq" id="NP_056849.1">
    <property type="nucleotide sequence ID" value="NC_001648.1"/>
</dbReference>
<dbReference type="SMR" id="Q66284"/>
<dbReference type="KEGG" id="vg:1403418"/>
<dbReference type="OrthoDB" id="31901at10239"/>
<dbReference type="Proteomes" id="UP000002244">
    <property type="component" value="Genome"/>
</dbReference>
<dbReference type="GO" id="GO:0030430">
    <property type="term" value="C:host cell cytoplasm"/>
    <property type="evidence" value="ECO:0007669"/>
    <property type="project" value="UniProtKB-SubCell"/>
</dbReference>
<dbReference type="GO" id="GO:0006417">
    <property type="term" value="P:regulation of translation"/>
    <property type="evidence" value="ECO:0007669"/>
    <property type="project" value="UniProtKB-KW"/>
</dbReference>
<gene>
    <name type="ORF">ORF 4</name>
</gene>
<feature type="chain" id="PRO_0000397900" description="Putative transactivator/viroplasmin protein">
    <location>
        <begin position="1"/>
        <end position="392"/>
    </location>
</feature>
<feature type="region of interest" description="Disordered" evidence="3">
    <location>
        <begin position="358"/>
        <end position="392"/>
    </location>
</feature>
<feature type="coiled-coil region" evidence="2">
    <location>
        <begin position="1"/>
        <end position="88"/>
    </location>
</feature>
<organismHost>
    <name type="scientific">Manihot esculenta</name>
    <name type="common">Cassava</name>
    <name type="synonym">Jatropha manihot</name>
    <dbReference type="NCBI Taxonomy" id="3983"/>
</organismHost>